<dbReference type="EC" id="5.3.3.2" evidence="1"/>
<dbReference type="EMBL" id="CP001403">
    <property type="protein sequence ID" value="ACP46432.1"/>
    <property type="molecule type" value="Genomic_DNA"/>
</dbReference>
<dbReference type="RefSeq" id="WP_012712024.1">
    <property type="nucleotide sequence ID" value="NC_012622.1"/>
</dbReference>
<dbReference type="SMR" id="C3N8S7"/>
<dbReference type="GeneID" id="84062367"/>
<dbReference type="KEGG" id="siy:YG5714_2183"/>
<dbReference type="HOGENOM" id="CLU_065515_1_0_2"/>
<dbReference type="Proteomes" id="UP000002308">
    <property type="component" value="Chromosome"/>
</dbReference>
<dbReference type="GO" id="GO:0005737">
    <property type="term" value="C:cytoplasm"/>
    <property type="evidence" value="ECO:0007669"/>
    <property type="project" value="UniProtKB-SubCell"/>
</dbReference>
<dbReference type="GO" id="GO:0010181">
    <property type="term" value="F:FMN binding"/>
    <property type="evidence" value="ECO:0007669"/>
    <property type="project" value="UniProtKB-UniRule"/>
</dbReference>
<dbReference type="GO" id="GO:0004452">
    <property type="term" value="F:isopentenyl-diphosphate delta-isomerase activity"/>
    <property type="evidence" value="ECO:0007669"/>
    <property type="project" value="UniProtKB-UniRule"/>
</dbReference>
<dbReference type="GO" id="GO:0000287">
    <property type="term" value="F:magnesium ion binding"/>
    <property type="evidence" value="ECO:0007669"/>
    <property type="project" value="UniProtKB-UniRule"/>
</dbReference>
<dbReference type="GO" id="GO:0070402">
    <property type="term" value="F:NADPH binding"/>
    <property type="evidence" value="ECO:0007669"/>
    <property type="project" value="UniProtKB-UniRule"/>
</dbReference>
<dbReference type="GO" id="GO:0016491">
    <property type="term" value="F:oxidoreductase activity"/>
    <property type="evidence" value="ECO:0007669"/>
    <property type="project" value="InterPro"/>
</dbReference>
<dbReference type="GO" id="GO:0008299">
    <property type="term" value="P:isoprenoid biosynthetic process"/>
    <property type="evidence" value="ECO:0007669"/>
    <property type="project" value="UniProtKB-UniRule"/>
</dbReference>
<dbReference type="CDD" id="cd02811">
    <property type="entry name" value="IDI-2_FMN"/>
    <property type="match status" value="1"/>
</dbReference>
<dbReference type="FunFam" id="3.20.20.70:FF:000258">
    <property type="entry name" value="Isopentenyl-diphosphate delta-isomerase"/>
    <property type="match status" value="1"/>
</dbReference>
<dbReference type="Gene3D" id="3.20.20.70">
    <property type="entry name" value="Aldolase class I"/>
    <property type="match status" value="1"/>
</dbReference>
<dbReference type="HAMAP" id="MF_00354">
    <property type="entry name" value="Idi_2"/>
    <property type="match status" value="1"/>
</dbReference>
<dbReference type="InterPro" id="IPR013785">
    <property type="entry name" value="Aldolase_TIM"/>
</dbReference>
<dbReference type="InterPro" id="IPR000262">
    <property type="entry name" value="FMN-dep_DH"/>
</dbReference>
<dbReference type="InterPro" id="IPR011179">
    <property type="entry name" value="IPdP_isomerase"/>
</dbReference>
<dbReference type="NCBIfam" id="TIGR02151">
    <property type="entry name" value="IPP_isom_2"/>
    <property type="match status" value="1"/>
</dbReference>
<dbReference type="PANTHER" id="PTHR43665">
    <property type="entry name" value="ISOPENTENYL-DIPHOSPHATE DELTA-ISOMERASE"/>
    <property type="match status" value="1"/>
</dbReference>
<dbReference type="PANTHER" id="PTHR43665:SF1">
    <property type="entry name" value="ISOPENTENYL-DIPHOSPHATE DELTA-ISOMERASE"/>
    <property type="match status" value="1"/>
</dbReference>
<dbReference type="Pfam" id="PF01070">
    <property type="entry name" value="FMN_dh"/>
    <property type="match status" value="1"/>
</dbReference>
<dbReference type="PIRSF" id="PIRSF003314">
    <property type="entry name" value="IPP_isomerase"/>
    <property type="match status" value="1"/>
</dbReference>
<dbReference type="SMART" id="SM01240">
    <property type="entry name" value="IMPDH"/>
    <property type="match status" value="1"/>
</dbReference>
<dbReference type="SUPFAM" id="SSF51395">
    <property type="entry name" value="FMN-linked oxidoreductases"/>
    <property type="match status" value="1"/>
</dbReference>
<organism>
    <name type="scientific">Saccharolobus islandicus (strain Y.G.57.14 / Yellowstone #1)</name>
    <name type="common">Sulfolobus islandicus</name>
    <dbReference type="NCBI Taxonomy" id="439386"/>
    <lineage>
        <taxon>Archaea</taxon>
        <taxon>Thermoproteota</taxon>
        <taxon>Thermoprotei</taxon>
        <taxon>Sulfolobales</taxon>
        <taxon>Sulfolobaceae</taxon>
        <taxon>Saccharolobus</taxon>
    </lineage>
</organism>
<name>IDI2_SACI7</name>
<comment type="function">
    <text evidence="1">Involved in the biosynthesis of isoprenoids. Catalyzes the 1,3-allylic rearrangement of the homoallylic substrate isopentenyl (IPP) to its allylic isomer, dimethylallyl diphosphate (DMAPP).</text>
</comment>
<comment type="catalytic activity">
    <reaction evidence="1">
        <text>isopentenyl diphosphate = dimethylallyl diphosphate</text>
        <dbReference type="Rhea" id="RHEA:23284"/>
        <dbReference type="ChEBI" id="CHEBI:57623"/>
        <dbReference type="ChEBI" id="CHEBI:128769"/>
        <dbReference type="EC" id="5.3.3.2"/>
    </reaction>
</comment>
<comment type="cofactor">
    <cofactor evidence="1">
        <name>FMN</name>
        <dbReference type="ChEBI" id="CHEBI:58210"/>
    </cofactor>
</comment>
<comment type="cofactor">
    <cofactor evidence="1">
        <name>NADPH</name>
        <dbReference type="ChEBI" id="CHEBI:57783"/>
    </cofactor>
</comment>
<comment type="cofactor">
    <cofactor evidence="1">
        <name>Mg(2+)</name>
        <dbReference type="ChEBI" id="CHEBI:18420"/>
    </cofactor>
</comment>
<comment type="subunit">
    <text evidence="1">Homooctamer. Dimer of tetramers.</text>
</comment>
<comment type="subcellular location">
    <subcellularLocation>
        <location evidence="1">Cytoplasm</location>
    </subcellularLocation>
</comment>
<comment type="similarity">
    <text evidence="1">Belongs to the IPP isomerase type 2 family.</text>
</comment>
<keyword id="KW-0963">Cytoplasm</keyword>
<keyword id="KW-0285">Flavoprotein</keyword>
<keyword id="KW-0288">FMN</keyword>
<keyword id="KW-0413">Isomerase</keyword>
<keyword id="KW-0414">Isoprene biosynthesis</keyword>
<keyword id="KW-0460">Magnesium</keyword>
<keyword id="KW-0479">Metal-binding</keyword>
<keyword id="KW-0521">NADP</keyword>
<proteinExistence type="inferred from homology"/>
<gene>
    <name evidence="1" type="primary">fni</name>
    <name type="ordered locus">YG5714_2183</name>
</gene>
<sequence length="368" mass="40444">MPDIVNRKVEHVEIAAFENVDGLSSSTFLNDVILVHQGFPGISFSEINTKTKFFRKEISVPIMVTGMTGGRNELGRINKIIAEVTEKFGIPMGVGSQRVAIEKAEARESFAIVRKVAPTIPIIANLGMPQLVKGYGLKEFQDAIQMIEADAIAVHLNPAQEVFQPEGEPEYQIYALEKLRDISKELSVPIIVKESGNGISMETAKLLYSYGIKNFDTSGQGGTNWIAIEMIRDIRRGNWKAESAKNFLDWGVPTAASIMEVRYSVPDSFLVGSGGIRSGLDAAKAIALGADIAGMALPVLKSAIEGKESLEQFFRKIIFELKAAMMLTGSKDVNALKKTSIVILGKLKEWAEYRGINLSTYDKVRKRE</sequence>
<evidence type="ECO:0000255" key="1">
    <source>
        <dbReference type="HAMAP-Rule" id="MF_00354"/>
    </source>
</evidence>
<feature type="chain" id="PRO_1000205358" description="Isopentenyl-diphosphate delta-isomerase">
    <location>
        <begin position="1"/>
        <end position="368"/>
    </location>
</feature>
<feature type="binding site" evidence="1">
    <location>
        <begin position="7"/>
        <end position="8"/>
    </location>
    <ligand>
        <name>substrate</name>
    </ligand>
</feature>
<feature type="binding site" evidence="1">
    <location>
        <position position="65"/>
    </location>
    <ligand>
        <name>FMN</name>
        <dbReference type="ChEBI" id="CHEBI:58210"/>
    </ligand>
</feature>
<feature type="binding site" evidence="1">
    <location>
        <begin position="66"/>
        <end position="68"/>
    </location>
    <ligand>
        <name>FMN</name>
        <dbReference type="ChEBI" id="CHEBI:58210"/>
    </ligand>
</feature>
<feature type="binding site" evidence="1">
    <location>
        <begin position="96"/>
        <end position="98"/>
    </location>
    <ligand>
        <name>substrate</name>
    </ligand>
</feature>
<feature type="binding site" evidence="1">
    <location>
        <position position="96"/>
    </location>
    <ligand>
        <name>FMN</name>
        <dbReference type="ChEBI" id="CHEBI:58210"/>
    </ligand>
</feature>
<feature type="binding site" evidence="1">
    <location>
        <position position="125"/>
    </location>
    <ligand>
        <name>FMN</name>
        <dbReference type="ChEBI" id="CHEBI:58210"/>
    </ligand>
</feature>
<feature type="binding site" evidence="1">
    <location>
        <position position="160"/>
    </location>
    <ligand>
        <name>substrate</name>
    </ligand>
</feature>
<feature type="binding site" evidence="1">
    <location>
        <position position="161"/>
    </location>
    <ligand>
        <name>Mg(2+)</name>
        <dbReference type="ChEBI" id="CHEBI:18420"/>
    </ligand>
</feature>
<feature type="binding site" evidence="1">
    <location>
        <position position="193"/>
    </location>
    <ligand>
        <name>FMN</name>
        <dbReference type="ChEBI" id="CHEBI:58210"/>
    </ligand>
</feature>
<feature type="binding site" evidence="1">
    <location>
        <position position="218"/>
    </location>
    <ligand>
        <name>FMN</name>
        <dbReference type="ChEBI" id="CHEBI:58210"/>
    </ligand>
</feature>
<feature type="binding site" evidence="1">
    <location>
        <position position="223"/>
    </location>
    <ligand>
        <name>FMN</name>
        <dbReference type="ChEBI" id="CHEBI:58210"/>
    </ligand>
</feature>
<feature type="binding site" evidence="1">
    <location>
        <begin position="275"/>
        <end position="277"/>
    </location>
    <ligand>
        <name>FMN</name>
        <dbReference type="ChEBI" id="CHEBI:58210"/>
    </ligand>
</feature>
<feature type="binding site" evidence="1">
    <location>
        <begin position="296"/>
        <end position="297"/>
    </location>
    <ligand>
        <name>FMN</name>
        <dbReference type="ChEBI" id="CHEBI:58210"/>
    </ligand>
</feature>
<protein>
    <recommendedName>
        <fullName evidence="1">Isopentenyl-diphosphate delta-isomerase</fullName>
        <shortName evidence="1">IPP isomerase</shortName>
        <ecNumber evidence="1">5.3.3.2</ecNumber>
    </recommendedName>
    <alternativeName>
        <fullName evidence="1">Isopentenyl diphosphate:dimethylallyl diphosphate isomerase</fullName>
    </alternativeName>
    <alternativeName>
        <fullName evidence="1">Isopentenyl pyrophosphate isomerase</fullName>
    </alternativeName>
    <alternativeName>
        <fullName evidence="1">Type 2 isopentenyl diphosphate isomerase</fullName>
        <shortName evidence="1">IDI-2</shortName>
    </alternativeName>
</protein>
<reference key="1">
    <citation type="journal article" date="2009" name="Proc. Natl. Acad. Sci. U.S.A.">
        <title>Biogeography of the Sulfolobus islandicus pan-genome.</title>
        <authorList>
            <person name="Reno M.L."/>
            <person name="Held N.L."/>
            <person name="Fields C.J."/>
            <person name="Burke P.V."/>
            <person name="Whitaker R.J."/>
        </authorList>
    </citation>
    <scope>NUCLEOTIDE SEQUENCE [LARGE SCALE GENOMIC DNA]</scope>
    <source>
        <strain>Y.G.57.14 / Yellowstone #1</strain>
    </source>
</reference>
<accession>C3N8S7</accession>